<reference key="1">
    <citation type="journal article" date="1993" name="Biochem. J.">
        <title>S-adenosyl-L-methionine decarboxylase of Acanthamoeba castellanii (Neff): purification and properties.</title>
        <authorList>
            <person name="Hugo E.R."/>
            <person name="Byers T.J."/>
        </authorList>
    </citation>
    <scope>PROTEIN SEQUENCE</scope>
    <scope>PYRUVATE FORMATION AT SER-1</scope>
    <scope>CHARACTERIZATION</scope>
</reference>
<proteinExistence type="evidence at protein level"/>
<accession>P34039</accession>
<feature type="chain" id="PRO_0000157475" description="S-adenosylmethionine decarboxylase subunit alpha">
    <location>
        <begin position="1"/>
        <end position="19" status="greater than"/>
    </location>
</feature>
<feature type="active site" description="Schiff-base intermediate with substrate; via pyruvic acid" evidence="1">
    <location>
        <position position="1"/>
    </location>
</feature>
<feature type="active site" description="Proton donor; for catalytic activity" evidence="1">
    <location>
        <position position="15"/>
    </location>
</feature>
<feature type="modified residue" description="Pyruvic acid (Ser); by autocatalysis" evidence="2">
    <location>
        <position position="1"/>
    </location>
</feature>
<feature type="non-terminal residue">
    <location>
        <position position="19"/>
    </location>
</feature>
<organism>
    <name type="scientific">Acanthamoeba castellanii</name>
    <name type="common">Amoeba</name>
    <dbReference type="NCBI Taxonomy" id="5755"/>
    <lineage>
        <taxon>Eukaryota</taxon>
        <taxon>Amoebozoa</taxon>
        <taxon>Discosea</taxon>
        <taxon>Longamoebia</taxon>
        <taxon>Centramoebida</taxon>
        <taxon>Acanthamoebidae</taxon>
        <taxon>Acanthamoeba</taxon>
    </lineage>
</organism>
<comment type="function">
    <text>S-adenosylmethionine decarboxylase is essential for the biosynthesis of spermine and spermidine. The alpha subunit contains the active site.</text>
</comment>
<comment type="catalytic activity">
    <reaction>
        <text>S-adenosyl-L-methionine + H(+) = S-adenosyl 3-(methylsulfanyl)propylamine + CO2</text>
        <dbReference type="Rhea" id="RHEA:15981"/>
        <dbReference type="ChEBI" id="CHEBI:15378"/>
        <dbReference type="ChEBI" id="CHEBI:16526"/>
        <dbReference type="ChEBI" id="CHEBI:57443"/>
        <dbReference type="ChEBI" id="CHEBI:59789"/>
        <dbReference type="EC" id="4.1.1.50"/>
    </reaction>
</comment>
<comment type="cofactor">
    <cofactor>
        <name>pyruvate</name>
        <dbReference type="ChEBI" id="CHEBI:15361"/>
    </cofactor>
    <text>Binds 1 pyruvoyl group covalently per subunit.</text>
</comment>
<comment type="pathway">
    <text>Amine and polyamine biosynthesis; S-adenosylmethioninamine biosynthesis; S-adenosylmethioninamine from S-adenosyl-L-methionine: step 1/1.</text>
</comment>
<comment type="subunit">
    <text>Heterotetramer of two alpha and two beta chains.</text>
</comment>
<comment type="developmental stage">
    <text>Expressed only during exponential growth.</text>
</comment>
<comment type="induction">
    <text>Stimulated by putrescine. Inhibited by aromatic diamidines berenil, pentamidine, propamidine, hydroxystilbamidine, by ethidium bromide and methylglyoxal.</text>
</comment>
<comment type="PTM">
    <text evidence="1">Is synthesized initially as an inactive proenzyme. Formation of the active enzyme involves a self-maturation process in which the active site pyruvoyl group is generated from an internal serine residue via an autocatalytic post-translational modification. Two non-identical subunits are generated from the proenzyme in this reaction, and the pyruvate is formed at the N-terminus of the alpha chain, which is derived from the carboxyl end of the proenzyme. The post-translation cleavage follows an unusual pathway, termed non-hydrolytic serinolysis, in which the side chain hydroxyl group of the serine supplies its oxygen atom to form the C-terminus of the beta chain, while the remainder of the serine residue undergoes an oxidative deamination to produce ammonia and the pyruvoyl group blocking the N-terminus of the alpha chain (By similarity).</text>
</comment>
<comment type="similarity">
    <text evidence="3">Belongs to the eukaryotic AdoMetDC family.</text>
</comment>
<name>DCAM_ACACA</name>
<sequence length="19" mass="2154">SSMFVWNTKLILKTCGTXL</sequence>
<keyword id="KW-0068">Autocatalytic cleavage</keyword>
<keyword id="KW-0210">Decarboxylase</keyword>
<keyword id="KW-0903">Direct protein sequencing</keyword>
<keyword id="KW-0456">Lyase</keyword>
<keyword id="KW-0620">Polyamine biosynthesis</keyword>
<keyword id="KW-0670">Pyruvate</keyword>
<keyword id="KW-0949">S-adenosyl-L-methionine</keyword>
<keyword id="KW-0704">Schiff base</keyword>
<keyword id="KW-0745">Spermidine biosynthesis</keyword>
<protein>
    <recommendedName>
        <fullName>S-adenosylmethionine decarboxylase subunit alpha</fullName>
        <shortName>AdoMetDC</shortName>
        <shortName>SAMDC</shortName>
        <ecNumber>4.1.1.50</ecNumber>
    </recommendedName>
</protein>
<dbReference type="EC" id="4.1.1.50"/>
<dbReference type="PIR" id="S38763">
    <property type="entry name" value="S38763"/>
</dbReference>
<dbReference type="UniPathway" id="UPA00331">
    <property type="reaction ID" value="UER00451"/>
</dbReference>
<dbReference type="GO" id="GO:0004014">
    <property type="term" value="F:adenosylmethionine decarboxylase activity"/>
    <property type="evidence" value="ECO:0007669"/>
    <property type="project" value="UniProtKB-EC"/>
</dbReference>
<dbReference type="GO" id="GO:0008295">
    <property type="term" value="P:spermidine biosynthetic process"/>
    <property type="evidence" value="ECO:0007669"/>
    <property type="project" value="UniProtKB-KW"/>
</dbReference>
<dbReference type="Gene3D" id="3.60.90.10">
    <property type="entry name" value="S-adenosylmethionine decarboxylase"/>
    <property type="match status" value="1"/>
</dbReference>
<dbReference type="InterPro" id="IPR048283">
    <property type="entry name" value="AdoMetDC-like"/>
</dbReference>
<dbReference type="InterPro" id="IPR016067">
    <property type="entry name" value="S-AdoMet_deCO2ase_core"/>
</dbReference>
<dbReference type="Pfam" id="PF01536">
    <property type="entry name" value="SAM_decarbox"/>
    <property type="match status" value="1"/>
</dbReference>
<dbReference type="SUPFAM" id="SSF56276">
    <property type="entry name" value="S-adenosylmethionine decarboxylase"/>
    <property type="match status" value="1"/>
</dbReference>
<evidence type="ECO:0000250" key="1"/>
<evidence type="ECO:0000269" key="2">
    <source>
    </source>
</evidence>
<evidence type="ECO:0000305" key="3"/>